<feature type="chain" id="PRO_0000070848" description="Chaperone protein DnaJ">
    <location>
        <begin position="1"/>
        <end position="372"/>
    </location>
</feature>
<feature type="domain" description="J" evidence="1">
    <location>
        <begin position="5"/>
        <end position="70"/>
    </location>
</feature>
<feature type="repeat" description="CXXCXGXG motif">
    <location>
        <begin position="143"/>
        <end position="150"/>
    </location>
</feature>
<feature type="repeat" description="CXXCXGXG motif">
    <location>
        <begin position="160"/>
        <end position="167"/>
    </location>
</feature>
<feature type="repeat" description="CXXCXGXG motif">
    <location>
        <begin position="182"/>
        <end position="189"/>
    </location>
</feature>
<feature type="repeat" description="CXXCXGXG motif">
    <location>
        <begin position="196"/>
        <end position="203"/>
    </location>
</feature>
<feature type="zinc finger region" description="CR-type" evidence="1">
    <location>
        <begin position="130"/>
        <end position="208"/>
    </location>
</feature>
<feature type="binding site" evidence="1">
    <location>
        <position position="143"/>
    </location>
    <ligand>
        <name>Zn(2+)</name>
        <dbReference type="ChEBI" id="CHEBI:29105"/>
        <label>1</label>
    </ligand>
</feature>
<feature type="binding site" evidence="1">
    <location>
        <position position="146"/>
    </location>
    <ligand>
        <name>Zn(2+)</name>
        <dbReference type="ChEBI" id="CHEBI:29105"/>
        <label>1</label>
    </ligand>
</feature>
<feature type="binding site" evidence="1">
    <location>
        <position position="160"/>
    </location>
    <ligand>
        <name>Zn(2+)</name>
        <dbReference type="ChEBI" id="CHEBI:29105"/>
        <label>2</label>
    </ligand>
</feature>
<feature type="binding site" evidence="1">
    <location>
        <position position="163"/>
    </location>
    <ligand>
        <name>Zn(2+)</name>
        <dbReference type="ChEBI" id="CHEBI:29105"/>
        <label>2</label>
    </ligand>
</feature>
<feature type="binding site" evidence="1">
    <location>
        <position position="182"/>
    </location>
    <ligand>
        <name>Zn(2+)</name>
        <dbReference type="ChEBI" id="CHEBI:29105"/>
        <label>2</label>
    </ligand>
</feature>
<feature type="binding site" evidence="1">
    <location>
        <position position="185"/>
    </location>
    <ligand>
        <name>Zn(2+)</name>
        <dbReference type="ChEBI" id="CHEBI:29105"/>
        <label>2</label>
    </ligand>
</feature>
<feature type="binding site" evidence="1">
    <location>
        <position position="196"/>
    </location>
    <ligand>
        <name>Zn(2+)</name>
        <dbReference type="ChEBI" id="CHEBI:29105"/>
        <label>1</label>
    </ligand>
</feature>
<feature type="binding site" evidence="1">
    <location>
        <position position="199"/>
    </location>
    <ligand>
        <name>Zn(2+)</name>
        <dbReference type="ChEBI" id="CHEBI:29105"/>
        <label>1</label>
    </ligand>
</feature>
<sequence>MAKKDYYDVLGVERGADEKEIKRAYKKLAMKYHPDRTQGNKELEEKFKEIQEAYEVLSDKQKRANYDQYGHAAFEQGGFGGGGFSGADFGDIFGDMFGDIFGGGRARQRVVRGDDLRYDLEISLEEAVRGTTKDIQINTLAHCDSCDGSGAEKGSKVETCSTCHGAGRVRRQQGFFVTEQVCPSCHGSGKKIEKPCKSCHGDGRVHKKKNLSVKIPAGVDTGNQLRLSGEGAAGENGAPNGDLYVVIHVRDHHIFERDGSNLYCEVPISFTMAALGGEIEVPTLDGRVKLKIPAETQTGKLFRMRGKGVTSARSAYAGDLICKIIVETPVKLNEEQKALLRQLEESLEGSSNKPKSSSFFDGVKKFFDNLGK</sequence>
<proteinExistence type="inferred from homology"/>
<dbReference type="EMBL" id="AE004439">
    <property type="protein sequence ID" value="AAK02824.1"/>
    <property type="molecule type" value="Genomic_DNA"/>
</dbReference>
<dbReference type="RefSeq" id="WP_005751556.1">
    <property type="nucleotide sequence ID" value="NC_002663.1"/>
</dbReference>
<dbReference type="SMR" id="Q9CMS2"/>
<dbReference type="STRING" id="272843.PM0740"/>
<dbReference type="EnsemblBacteria" id="AAK02824">
    <property type="protein sequence ID" value="AAK02824"/>
    <property type="gene ID" value="PM0740"/>
</dbReference>
<dbReference type="GeneID" id="77207833"/>
<dbReference type="KEGG" id="pmu:PM0740"/>
<dbReference type="HOGENOM" id="CLU_017633_0_7_6"/>
<dbReference type="OrthoDB" id="9779889at2"/>
<dbReference type="Proteomes" id="UP000000809">
    <property type="component" value="Chromosome"/>
</dbReference>
<dbReference type="GO" id="GO:0005737">
    <property type="term" value="C:cytoplasm"/>
    <property type="evidence" value="ECO:0007669"/>
    <property type="project" value="UniProtKB-SubCell"/>
</dbReference>
<dbReference type="GO" id="GO:0005524">
    <property type="term" value="F:ATP binding"/>
    <property type="evidence" value="ECO:0007669"/>
    <property type="project" value="InterPro"/>
</dbReference>
<dbReference type="GO" id="GO:0031072">
    <property type="term" value="F:heat shock protein binding"/>
    <property type="evidence" value="ECO:0007669"/>
    <property type="project" value="InterPro"/>
</dbReference>
<dbReference type="GO" id="GO:0051082">
    <property type="term" value="F:unfolded protein binding"/>
    <property type="evidence" value="ECO:0007669"/>
    <property type="project" value="UniProtKB-UniRule"/>
</dbReference>
<dbReference type="GO" id="GO:0008270">
    <property type="term" value="F:zinc ion binding"/>
    <property type="evidence" value="ECO:0007669"/>
    <property type="project" value="UniProtKB-UniRule"/>
</dbReference>
<dbReference type="GO" id="GO:0051085">
    <property type="term" value="P:chaperone cofactor-dependent protein refolding"/>
    <property type="evidence" value="ECO:0007669"/>
    <property type="project" value="TreeGrafter"/>
</dbReference>
<dbReference type="GO" id="GO:0006260">
    <property type="term" value="P:DNA replication"/>
    <property type="evidence" value="ECO:0007669"/>
    <property type="project" value="UniProtKB-KW"/>
</dbReference>
<dbReference type="GO" id="GO:0042026">
    <property type="term" value="P:protein refolding"/>
    <property type="evidence" value="ECO:0007669"/>
    <property type="project" value="TreeGrafter"/>
</dbReference>
<dbReference type="GO" id="GO:0009408">
    <property type="term" value="P:response to heat"/>
    <property type="evidence" value="ECO:0007669"/>
    <property type="project" value="InterPro"/>
</dbReference>
<dbReference type="CDD" id="cd06257">
    <property type="entry name" value="DnaJ"/>
    <property type="match status" value="1"/>
</dbReference>
<dbReference type="CDD" id="cd10747">
    <property type="entry name" value="DnaJ_C"/>
    <property type="match status" value="1"/>
</dbReference>
<dbReference type="CDD" id="cd10719">
    <property type="entry name" value="DnaJ_zf"/>
    <property type="match status" value="1"/>
</dbReference>
<dbReference type="FunFam" id="1.10.287.110:FF:000034">
    <property type="entry name" value="Chaperone protein DnaJ"/>
    <property type="match status" value="1"/>
</dbReference>
<dbReference type="FunFam" id="2.10.230.10:FF:000002">
    <property type="entry name" value="Molecular chaperone DnaJ"/>
    <property type="match status" value="1"/>
</dbReference>
<dbReference type="FunFam" id="2.60.260.20:FF:000004">
    <property type="entry name" value="Molecular chaperone DnaJ"/>
    <property type="match status" value="1"/>
</dbReference>
<dbReference type="Gene3D" id="1.10.287.110">
    <property type="entry name" value="DnaJ domain"/>
    <property type="match status" value="1"/>
</dbReference>
<dbReference type="Gene3D" id="2.10.230.10">
    <property type="entry name" value="Heat shock protein DnaJ, cysteine-rich domain"/>
    <property type="match status" value="1"/>
</dbReference>
<dbReference type="Gene3D" id="2.60.260.20">
    <property type="entry name" value="Urease metallochaperone UreE, N-terminal domain"/>
    <property type="match status" value="2"/>
</dbReference>
<dbReference type="HAMAP" id="MF_01152">
    <property type="entry name" value="DnaJ"/>
    <property type="match status" value="1"/>
</dbReference>
<dbReference type="InterPro" id="IPR012724">
    <property type="entry name" value="DnaJ"/>
</dbReference>
<dbReference type="InterPro" id="IPR002939">
    <property type="entry name" value="DnaJ_C"/>
</dbReference>
<dbReference type="InterPro" id="IPR001623">
    <property type="entry name" value="DnaJ_domain"/>
</dbReference>
<dbReference type="InterPro" id="IPR018253">
    <property type="entry name" value="DnaJ_domain_CS"/>
</dbReference>
<dbReference type="InterPro" id="IPR008971">
    <property type="entry name" value="HSP40/DnaJ_pept-bd"/>
</dbReference>
<dbReference type="InterPro" id="IPR001305">
    <property type="entry name" value="HSP_DnaJ_Cys-rich_dom"/>
</dbReference>
<dbReference type="InterPro" id="IPR036410">
    <property type="entry name" value="HSP_DnaJ_Cys-rich_dom_sf"/>
</dbReference>
<dbReference type="InterPro" id="IPR036869">
    <property type="entry name" value="J_dom_sf"/>
</dbReference>
<dbReference type="NCBIfam" id="TIGR02349">
    <property type="entry name" value="DnaJ_bact"/>
    <property type="match status" value="1"/>
</dbReference>
<dbReference type="NCBIfam" id="NF008035">
    <property type="entry name" value="PRK10767.1"/>
    <property type="match status" value="1"/>
</dbReference>
<dbReference type="PANTHER" id="PTHR43096:SF48">
    <property type="entry name" value="CHAPERONE PROTEIN DNAJ"/>
    <property type="match status" value="1"/>
</dbReference>
<dbReference type="PANTHER" id="PTHR43096">
    <property type="entry name" value="DNAJ HOMOLOG 1, MITOCHONDRIAL-RELATED"/>
    <property type="match status" value="1"/>
</dbReference>
<dbReference type="Pfam" id="PF00226">
    <property type="entry name" value="DnaJ"/>
    <property type="match status" value="1"/>
</dbReference>
<dbReference type="Pfam" id="PF01556">
    <property type="entry name" value="DnaJ_C"/>
    <property type="match status" value="1"/>
</dbReference>
<dbReference type="Pfam" id="PF00684">
    <property type="entry name" value="DnaJ_CXXCXGXG"/>
    <property type="match status" value="1"/>
</dbReference>
<dbReference type="PRINTS" id="PR00625">
    <property type="entry name" value="JDOMAIN"/>
</dbReference>
<dbReference type="SMART" id="SM00271">
    <property type="entry name" value="DnaJ"/>
    <property type="match status" value="1"/>
</dbReference>
<dbReference type="SUPFAM" id="SSF46565">
    <property type="entry name" value="Chaperone J-domain"/>
    <property type="match status" value="1"/>
</dbReference>
<dbReference type="SUPFAM" id="SSF57938">
    <property type="entry name" value="DnaJ/Hsp40 cysteine-rich domain"/>
    <property type="match status" value="1"/>
</dbReference>
<dbReference type="SUPFAM" id="SSF49493">
    <property type="entry name" value="HSP40/DnaJ peptide-binding domain"/>
    <property type="match status" value="2"/>
</dbReference>
<dbReference type="PROSITE" id="PS00636">
    <property type="entry name" value="DNAJ_1"/>
    <property type="match status" value="1"/>
</dbReference>
<dbReference type="PROSITE" id="PS50076">
    <property type="entry name" value="DNAJ_2"/>
    <property type="match status" value="1"/>
</dbReference>
<dbReference type="PROSITE" id="PS51188">
    <property type="entry name" value="ZF_CR"/>
    <property type="match status" value="1"/>
</dbReference>
<gene>
    <name evidence="1" type="primary">dnaJ</name>
    <name type="ordered locus">PM0740</name>
</gene>
<accession>Q9CMS2</accession>
<organism>
    <name type="scientific">Pasteurella multocida (strain Pm70)</name>
    <dbReference type="NCBI Taxonomy" id="272843"/>
    <lineage>
        <taxon>Bacteria</taxon>
        <taxon>Pseudomonadati</taxon>
        <taxon>Pseudomonadota</taxon>
        <taxon>Gammaproteobacteria</taxon>
        <taxon>Pasteurellales</taxon>
        <taxon>Pasteurellaceae</taxon>
        <taxon>Pasteurella</taxon>
    </lineage>
</organism>
<name>DNAJ_PASMU</name>
<protein>
    <recommendedName>
        <fullName evidence="1">Chaperone protein DnaJ</fullName>
    </recommendedName>
</protein>
<evidence type="ECO:0000255" key="1">
    <source>
        <dbReference type="HAMAP-Rule" id="MF_01152"/>
    </source>
</evidence>
<keyword id="KW-0143">Chaperone</keyword>
<keyword id="KW-0963">Cytoplasm</keyword>
<keyword id="KW-0235">DNA replication</keyword>
<keyword id="KW-0479">Metal-binding</keyword>
<keyword id="KW-1185">Reference proteome</keyword>
<keyword id="KW-0677">Repeat</keyword>
<keyword id="KW-0346">Stress response</keyword>
<keyword id="KW-0862">Zinc</keyword>
<keyword id="KW-0863">Zinc-finger</keyword>
<reference key="1">
    <citation type="journal article" date="2001" name="Proc. Natl. Acad. Sci. U.S.A.">
        <title>Complete genomic sequence of Pasteurella multocida Pm70.</title>
        <authorList>
            <person name="May B.J."/>
            <person name="Zhang Q."/>
            <person name="Li L.L."/>
            <person name="Paustian M.L."/>
            <person name="Whittam T.S."/>
            <person name="Kapur V."/>
        </authorList>
    </citation>
    <scope>NUCLEOTIDE SEQUENCE [LARGE SCALE GENOMIC DNA]</scope>
    <source>
        <strain>Pm70</strain>
    </source>
</reference>
<comment type="function">
    <text evidence="1">Participates actively in the response to hyperosmotic and heat shock by preventing the aggregation of stress-denatured proteins and by disaggregating proteins, also in an autonomous, DnaK-independent fashion. Unfolded proteins bind initially to DnaJ; upon interaction with the DnaJ-bound protein, DnaK hydrolyzes its bound ATP, resulting in the formation of a stable complex. GrpE releases ADP from DnaK; ATP binding to DnaK triggers the release of the substrate protein, thus completing the reaction cycle. Several rounds of ATP-dependent interactions between DnaJ, DnaK and GrpE are required for fully efficient folding. Also involved, together with DnaK and GrpE, in the DNA replication of plasmids through activation of initiation proteins.</text>
</comment>
<comment type="cofactor">
    <cofactor evidence="1">
        <name>Zn(2+)</name>
        <dbReference type="ChEBI" id="CHEBI:29105"/>
    </cofactor>
    <text evidence="1">Binds 2 Zn(2+) ions per monomer.</text>
</comment>
<comment type="subunit">
    <text evidence="1">Homodimer.</text>
</comment>
<comment type="subcellular location">
    <subcellularLocation>
        <location evidence="1">Cytoplasm</location>
    </subcellularLocation>
</comment>
<comment type="domain">
    <text evidence="1">The J domain is necessary and sufficient to stimulate DnaK ATPase activity. Zinc center 1 plays an important role in the autonomous, DnaK-independent chaperone activity of DnaJ. Zinc center 2 is essential for interaction with DnaK and for DnaJ activity.</text>
</comment>
<comment type="similarity">
    <text evidence="1">Belongs to the DnaJ family.</text>
</comment>